<comment type="function">
    <text evidence="2 5 6 8 9">Cytosolic phosphoenolpyruvate carboxykinase that catalyzes the reversible decarboxylation and phosphorylation of oxaloacetate (OAA) and acts as the rate-limiting enzyme in gluconeogenesis (PubMed:11792850, PubMed:11916968, PubMed:29230018, PubMed:30193097). Regulates cataplerosis and anaplerosis, the processes that control the levels of metabolic intermediates in the citric acid cycle (PubMed:30193097). At low glucose levels, it catalyzes the cataplerotic conversion of oxaloacetate to phosphoenolpyruvate (PEP), the rate-limiting step in the metabolic pathway that produces glucose from lactate and other precursors derived from the citric acid cycle (PubMed:30193097). At high glucose levels, it catalyzes the anaplerotic conversion of phosphoenolpyruvate to oxaloacetate (PubMed:30193097). Acts as a regulator of formation and maintenance of memory CD8(+) T-cells: up-regulated in these cells, where it generates phosphoenolpyruvate, via gluconeogenesis (PubMed:29230018). The resultant phosphoenolpyruvate flows to glycogen and pentose phosphate pathway, which is essential for memory CD8(+) T-cells homeostasis (PubMed:29230018). In addition to the phosphoenolpyruvate carboxykinase activity, also acts as a protein kinase when phosphorylated at Ser-90: phosphorylation at Ser-90 by AKT1 reduces the binding affinity to oxaloacetate and promotes an atypical serine protein kinase activity using GTP as donor (By similarity). The protein kinase activity regulates lipogenesis: upon phosphorylation at Ser-90, translocates to the endoplasmic reticulum and catalyzes phosphorylation of INSIG proteins (INSIG1 and INSIG2), thereby disrupting the interaction between INSIG proteins and SCAP and promoting nuclear translocation of SREBP proteins (SREBF1/SREBP1 or SREBF2/SREBP2) and subsequent transcription of downstream lipogenesis-related genes (By similarity).</text>
</comment>
<comment type="catalytic activity">
    <reaction evidence="5 8 9">
        <text>oxaloacetate + GTP = phosphoenolpyruvate + GDP + CO2</text>
        <dbReference type="Rhea" id="RHEA:10388"/>
        <dbReference type="ChEBI" id="CHEBI:16452"/>
        <dbReference type="ChEBI" id="CHEBI:16526"/>
        <dbReference type="ChEBI" id="CHEBI:37565"/>
        <dbReference type="ChEBI" id="CHEBI:58189"/>
        <dbReference type="ChEBI" id="CHEBI:58702"/>
        <dbReference type="EC" id="4.1.1.32"/>
    </reaction>
    <physiologicalReaction direction="left-to-right" evidence="8 9">
        <dbReference type="Rhea" id="RHEA:10389"/>
    </physiologicalReaction>
    <physiologicalReaction direction="right-to-left" evidence="9">
        <dbReference type="Rhea" id="RHEA:10390"/>
    </physiologicalReaction>
</comment>
<comment type="catalytic activity">
    <reaction evidence="2">
        <text>L-seryl-[protein] + GTP = O-phospho-L-seryl-[protein] + GDP + H(+)</text>
        <dbReference type="Rhea" id="RHEA:64020"/>
        <dbReference type="Rhea" id="RHEA-COMP:9863"/>
        <dbReference type="Rhea" id="RHEA-COMP:11604"/>
        <dbReference type="ChEBI" id="CHEBI:15378"/>
        <dbReference type="ChEBI" id="CHEBI:29999"/>
        <dbReference type="ChEBI" id="CHEBI:37565"/>
        <dbReference type="ChEBI" id="CHEBI:58189"/>
        <dbReference type="ChEBI" id="CHEBI:83421"/>
    </reaction>
    <physiologicalReaction direction="left-to-right" evidence="2">
        <dbReference type="Rhea" id="RHEA:64021"/>
    </physiologicalReaction>
</comment>
<comment type="cofactor">
    <cofactor evidence="2">
        <name>Mn(2+)</name>
        <dbReference type="ChEBI" id="CHEBI:29035"/>
    </cofactor>
    <text evidence="2">Binds 1 Mn(2+) ion per subunit.</text>
</comment>
<comment type="activity regulation">
    <text evidence="1 2 9">Phosphoenolpyruvate carboxykinase activity is regulated by acetylation and glucose levels (PubMed:30193097). The anaplerotic conversion of phosphoenolpyruvate to oxaloacetate is improved by PCK1 acetylation on Lys-91 (K91ac), Lys-473 (K473ac) and Lys-521 (K521ac) (By similarity). High glucose concentrations favor PCK1 anaplerotic activity by triggering acetylation on Lys-91 (K91ac). At low glucose levels, SIRT1-mediated deacetylation of Lys-91 promotes the cataplerotic conversion of oxaloacetate to phosphoenolpyruvate (By similarity). Phosphorylation at Ser-90 reduces the binding affinity to oxaloacetate and converts the enzyme into an atypical protein kinase using GTP as donor (By similarity).</text>
</comment>
<comment type="pathway">
    <text evidence="9">Carbohydrate biosynthesis; gluconeogenesis.</text>
</comment>
<comment type="subunit">
    <text evidence="2">Monomer.</text>
</comment>
<comment type="subcellular location">
    <subcellularLocation>
        <location evidence="2">Cytoplasm</location>
        <location evidence="2">Cytosol</location>
    </subcellularLocation>
    <subcellularLocation>
        <location evidence="2">Endoplasmic reticulum</location>
    </subcellularLocation>
    <text evidence="2">Phosphorylation at Ser-90 promotes translocation to the endoplasmic reticulum.</text>
</comment>
<comment type="induction">
    <text evidence="6 7 8">Expression is repressed by ATF3 (PubMed:11916968). Expression is regulated by glucocortinoids and insulin (PubMed:16100117). Up-regulated in CD8(+) memory T-cells (PubMed:29230018).</text>
</comment>
<comment type="PTM">
    <text evidence="2 9">Acetylated (PubMed:30193097). Lysine acetylation by p300/EP300 is increased on high glucose conditions and promotes ubiquitination by UBR5, acetylation is enhanced in the presence of BAG6. Deacetylated by SIRT2 (By similarity). Deacetylated by SIRT1 (PubMed:30193097).</text>
</comment>
<comment type="PTM">
    <text evidence="2">Ubiquitination by UBR5 leads to proteasomal degradation.</text>
</comment>
<comment type="PTM">
    <text evidence="2">Phosphorylated in a GSK3B-mediated pathway; phosphorylation affects the efficiency of SIRT1-mediated deacetylation, and regulates PCK1 ubiquitination and degradation. Phosphorylation at Ser-90 by AKT1 reduces the binding affinity to oxaloacetate and promotes the protein kinase activity: phosphorylated PCK1 translocates to the endoplasmic reticulum, where it phosphorylates INSIG1 and INSIG2.</text>
</comment>
<comment type="disruption phenotype">
    <text evidence="4">Mice do not survive beyond 2 to 3 days after birth.</text>
</comment>
<comment type="miscellaneous">
    <text>In eukaryotes there are two isozymes: a cytoplasmic one and a mitochondrial one.</text>
</comment>
<comment type="similarity">
    <text evidence="11">Belongs to the phosphoenolpyruvate carboxykinase [GTP] family.</text>
</comment>
<accession>Q9Z2V4</accession>
<accession>Q3UEH3</accession>
<sequence length="622" mass="69355">MPPQLHNGLDFSAKVIQGSLDSLPQAVRKFVEGNAQLCQPEYIHICDGSEEEYGQLLAHMQEEGVIRKLKKYDNCWLALTDPRDVARIESKTVIITQEQRDTVPIPKTGLSQLGRWMSEEDFEKAFNARFPGCMKGRTMYVIPFSMGPLGSPLAKIGIELTDSPYVVASMRIMTRMGISVLEALGDGEFIKCLHSVGCPLPLKKPLVNNWACNPELTLIAHLPDRREIISFGSGYGGNSLLGKKCFALRIASRLAKEEGWLAEHMLILGITNPEGKKKYLAAAFPSACGKTNLAMMNPSLPGWKVECVGDDIAWMKFDAQGNLRAINPENGFFGVAPGTSVKTNPNAIKTIQKNTIFTNVAETSDGGVYWEGIDEPLAPGVTITSWKNKEWRPQDAEPCAHPNSRFCTPASQCPIIDPAWESPEGVPIEGIIFGGRRPEGVPLVYEALSWQHGVFVGAAMRSEATAAAEHKGKIIMHDPFAMRPFFGYNFGKYLAHWLSMAHRPAAKLPKIFHVNWFRKDKDGKFLWPGFGENSRVLEWMFGRIEGEDSAKLTPIGYIPKENALNLKGLGGVNVEELFGISKEFWEKEVEEIDRYLEDQVNTDLPYEIERELRALKQRISQM</sequence>
<gene>
    <name evidence="12" type="primary">Pck1</name>
    <name evidence="10" type="synonym">Pepck</name>
</gene>
<proteinExistence type="evidence at protein level"/>
<reference key="1">
    <citation type="journal article" date="1999" name="Mol. Cell. Endocrinol.">
        <title>Isolation and characterization of the mouse cytosolic phosphoenolpyruvate carboxykinase (GTP) gene: evidence for tissue-specific hypersensitive sites.</title>
        <authorList>
            <person name="Williams C.P."/>
            <person name="Postic C."/>
            <person name="Robin D."/>
            <person name="Robin P."/>
            <person name="Parrinello J."/>
            <person name="Shelton K."/>
            <person name="Printz R.L."/>
            <person name="Magnuson M.A."/>
            <person name="Granner D.K."/>
            <person name="Forest C."/>
            <person name="Chalkley R."/>
        </authorList>
    </citation>
    <scope>NUCLEOTIDE SEQUENCE [GENOMIC DNA]</scope>
    <source>
        <strain>129/Sv</strain>
    </source>
</reference>
<reference key="2">
    <citation type="journal article" date="2005" name="Science">
        <title>The transcriptional landscape of the mammalian genome.</title>
        <authorList>
            <person name="Carninci P."/>
            <person name="Kasukawa T."/>
            <person name="Katayama S."/>
            <person name="Gough J."/>
            <person name="Frith M.C."/>
            <person name="Maeda N."/>
            <person name="Oyama R."/>
            <person name="Ravasi T."/>
            <person name="Lenhard B."/>
            <person name="Wells C."/>
            <person name="Kodzius R."/>
            <person name="Shimokawa K."/>
            <person name="Bajic V.B."/>
            <person name="Brenner S.E."/>
            <person name="Batalov S."/>
            <person name="Forrest A.R."/>
            <person name="Zavolan M."/>
            <person name="Davis M.J."/>
            <person name="Wilming L.G."/>
            <person name="Aidinis V."/>
            <person name="Allen J.E."/>
            <person name="Ambesi-Impiombato A."/>
            <person name="Apweiler R."/>
            <person name="Aturaliya R.N."/>
            <person name="Bailey T.L."/>
            <person name="Bansal M."/>
            <person name="Baxter L."/>
            <person name="Beisel K.W."/>
            <person name="Bersano T."/>
            <person name="Bono H."/>
            <person name="Chalk A.M."/>
            <person name="Chiu K.P."/>
            <person name="Choudhary V."/>
            <person name="Christoffels A."/>
            <person name="Clutterbuck D.R."/>
            <person name="Crowe M.L."/>
            <person name="Dalla E."/>
            <person name="Dalrymple B.P."/>
            <person name="de Bono B."/>
            <person name="Della Gatta G."/>
            <person name="di Bernardo D."/>
            <person name="Down T."/>
            <person name="Engstrom P."/>
            <person name="Fagiolini M."/>
            <person name="Faulkner G."/>
            <person name="Fletcher C.F."/>
            <person name="Fukushima T."/>
            <person name="Furuno M."/>
            <person name="Futaki S."/>
            <person name="Gariboldi M."/>
            <person name="Georgii-Hemming P."/>
            <person name="Gingeras T.R."/>
            <person name="Gojobori T."/>
            <person name="Green R.E."/>
            <person name="Gustincich S."/>
            <person name="Harbers M."/>
            <person name="Hayashi Y."/>
            <person name="Hensch T.K."/>
            <person name="Hirokawa N."/>
            <person name="Hill D."/>
            <person name="Huminiecki L."/>
            <person name="Iacono M."/>
            <person name="Ikeo K."/>
            <person name="Iwama A."/>
            <person name="Ishikawa T."/>
            <person name="Jakt M."/>
            <person name="Kanapin A."/>
            <person name="Katoh M."/>
            <person name="Kawasawa Y."/>
            <person name="Kelso J."/>
            <person name="Kitamura H."/>
            <person name="Kitano H."/>
            <person name="Kollias G."/>
            <person name="Krishnan S.P."/>
            <person name="Kruger A."/>
            <person name="Kummerfeld S.K."/>
            <person name="Kurochkin I.V."/>
            <person name="Lareau L.F."/>
            <person name="Lazarevic D."/>
            <person name="Lipovich L."/>
            <person name="Liu J."/>
            <person name="Liuni S."/>
            <person name="McWilliam S."/>
            <person name="Madan Babu M."/>
            <person name="Madera M."/>
            <person name="Marchionni L."/>
            <person name="Matsuda H."/>
            <person name="Matsuzawa S."/>
            <person name="Miki H."/>
            <person name="Mignone F."/>
            <person name="Miyake S."/>
            <person name="Morris K."/>
            <person name="Mottagui-Tabar S."/>
            <person name="Mulder N."/>
            <person name="Nakano N."/>
            <person name="Nakauchi H."/>
            <person name="Ng P."/>
            <person name="Nilsson R."/>
            <person name="Nishiguchi S."/>
            <person name="Nishikawa S."/>
            <person name="Nori F."/>
            <person name="Ohara O."/>
            <person name="Okazaki Y."/>
            <person name="Orlando V."/>
            <person name="Pang K.C."/>
            <person name="Pavan W.J."/>
            <person name="Pavesi G."/>
            <person name="Pesole G."/>
            <person name="Petrovsky N."/>
            <person name="Piazza S."/>
            <person name="Reed J."/>
            <person name="Reid J.F."/>
            <person name="Ring B.Z."/>
            <person name="Ringwald M."/>
            <person name="Rost B."/>
            <person name="Ruan Y."/>
            <person name="Salzberg S.L."/>
            <person name="Sandelin A."/>
            <person name="Schneider C."/>
            <person name="Schoenbach C."/>
            <person name="Sekiguchi K."/>
            <person name="Semple C.A."/>
            <person name="Seno S."/>
            <person name="Sessa L."/>
            <person name="Sheng Y."/>
            <person name="Shibata Y."/>
            <person name="Shimada H."/>
            <person name="Shimada K."/>
            <person name="Silva D."/>
            <person name="Sinclair B."/>
            <person name="Sperling S."/>
            <person name="Stupka E."/>
            <person name="Sugiura K."/>
            <person name="Sultana R."/>
            <person name="Takenaka Y."/>
            <person name="Taki K."/>
            <person name="Tammoja K."/>
            <person name="Tan S.L."/>
            <person name="Tang S."/>
            <person name="Taylor M.S."/>
            <person name="Tegner J."/>
            <person name="Teichmann S.A."/>
            <person name="Ueda H.R."/>
            <person name="van Nimwegen E."/>
            <person name="Verardo R."/>
            <person name="Wei C.L."/>
            <person name="Yagi K."/>
            <person name="Yamanishi H."/>
            <person name="Zabarovsky E."/>
            <person name="Zhu S."/>
            <person name="Zimmer A."/>
            <person name="Hide W."/>
            <person name="Bult C."/>
            <person name="Grimmond S.M."/>
            <person name="Teasdale R.D."/>
            <person name="Liu E.T."/>
            <person name="Brusic V."/>
            <person name="Quackenbush J."/>
            <person name="Wahlestedt C."/>
            <person name="Mattick J.S."/>
            <person name="Hume D.A."/>
            <person name="Kai C."/>
            <person name="Sasaki D."/>
            <person name="Tomaru Y."/>
            <person name="Fukuda S."/>
            <person name="Kanamori-Katayama M."/>
            <person name="Suzuki M."/>
            <person name="Aoki J."/>
            <person name="Arakawa T."/>
            <person name="Iida J."/>
            <person name="Imamura K."/>
            <person name="Itoh M."/>
            <person name="Kato T."/>
            <person name="Kawaji H."/>
            <person name="Kawagashira N."/>
            <person name="Kawashima T."/>
            <person name="Kojima M."/>
            <person name="Kondo S."/>
            <person name="Konno H."/>
            <person name="Nakano K."/>
            <person name="Ninomiya N."/>
            <person name="Nishio T."/>
            <person name="Okada M."/>
            <person name="Plessy C."/>
            <person name="Shibata K."/>
            <person name="Shiraki T."/>
            <person name="Suzuki S."/>
            <person name="Tagami M."/>
            <person name="Waki K."/>
            <person name="Watahiki A."/>
            <person name="Okamura-Oho Y."/>
            <person name="Suzuki H."/>
            <person name="Kawai J."/>
            <person name="Hayashizaki Y."/>
        </authorList>
    </citation>
    <scope>NUCLEOTIDE SEQUENCE [LARGE SCALE MRNA]</scope>
    <source>
        <strain>C57BL/6J</strain>
        <tissue>Liver</tissue>
        <tissue>Ovary</tissue>
    </source>
</reference>
<reference key="3">
    <citation type="journal article" date="2000" name="Mol. Cell. Biol.">
        <title>Phosphoenolpyruvate carboxykinase is necessary for the integration of hepatic energy metabolism.</title>
        <authorList>
            <person name="She P."/>
            <person name="Shiota M."/>
            <person name="Shelton K.D."/>
            <person name="Chalkley R."/>
            <person name="Postic C."/>
            <person name="Magnuson M.A."/>
        </authorList>
    </citation>
    <scope>DISRUPTION PHENOTYPE</scope>
</reference>
<reference key="4">
    <citation type="journal article" date="2002" name="J. Biol. Chem.">
        <title>The roles of ATF3 in liver dysfunction and the regulation of phosphoenolpyruvate carboxykinase gene expression.</title>
        <authorList>
            <person name="Allen-Jennings A.E."/>
            <person name="Hartman M.G."/>
            <person name="Kociba G.J."/>
            <person name="Hai T."/>
        </authorList>
    </citation>
    <scope>FUNCTION</scope>
    <scope>INDUCTION</scope>
</reference>
<reference key="5">
    <citation type="journal article" date="2002" name="Proc. Natl. Acad. Sci. U.S.A.">
        <title>A mutation in the peroxisome proliferator-activated receptor gamma-binding site in the gene for the cytosolic form of phosphoenolpyruvate carboxykinase reduces adipose tissue size and fat content in mice.</title>
        <authorList>
            <person name="Olswang Y."/>
            <person name="Cohen H."/>
            <person name="Papo O."/>
            <person name="Cassuto H."/>
            <person name="Croniger C.M."/>
            <person name="Hakimi P."/>
            <person name="Tilghman S.M."/>
            <person name="Hanson R.W."/>
            <person name="Reshef L."/>
        </authorList>
    </citation>
    <scope>FUNCTION</scope>
    <scope>CATALYTIC ACTIVITY</scope>
</reference>
<reference key="6">
    <citation type="journal article" date="2005" name="J. Biol. Chem.">
        <title>Glucocorticoids regulate transcription of the gene for phosphoenolpyruvate carboxykinase in the liver via an extended glucocorticoid regulatory unit.</title>
        <authorList>
            <person name="Cassuto H."/>
            <person name="Kochan K."/>
            <person name="Chakravarty K."/>
            <person name="Cohen H."/>
            <person name="Blum B."/>
            <person name="Olswang Y."/>
            <person name="Hakimi P."/>
            <person name="Xu C."/>
            <person name="Massillon D."/>
            <person name="Hanson R.W."/>
            <person name="Reshef L."/>
        </authorList>
    </citation>
    <scope>INDUCTION</scope>
</reference>
<reference key="7">
    <citation type="journal article" date="2010" name="Cell">
        <title>A tissue-specific atlas of mouse protein phosphorylation and expression.</title>
        <authorList>
            <person name="Huttlin E.L."/>
            <person name="Jedrychowski M.P."/>
            <person name="Elias J.E."/>
            <person name="Goswami T."/>
            <person name="Rad R."/>
            <person name="Beausoleil S.A."/>
            <person name="Villen J."/>
            <person name="Haas W."/>
            <person name="Sowa M.E."/>
            <person name="Gygi S.P."/>
        </authorList>
    </citation>
    <scope>PHOSPHORYLATION [LARGE SCALE ANALYSIS] AT SER-19 AND SER-118</scope>
    <scope>IDENTIFICATION BY MASS SPECTROMETRY [LARGE SCALE ANALYSIS]</scope>
    <source>
        <tissue>Brown adipose tissue</tissue>
        <tissue>Kidney</tissue>
        <tissue>Liver</tissue>
    </source>
</reference>
<reference key="8">
    <citation type="journal article" date="2018" name="Mol. Cell">
        <title>Dynamic acetylation of phosphoenolpyruvate carboxykinase toggles enzyme activity between gluconeogenic and anaplerotic reactions.</title>
        <authorList>
            <person name="Latorre-Muro P."/>
            <person name="Baeza J."/>
            <person name="Armstrong E.A."/>
            <person name="Hurtado-Guerrero R."/>
            <person name="Corzana F."/>
            <person name="Wu L.E."/>
            <person name="Sinclair D.A."/>
            <person name="Lopez-Buesa P."/>
            <person name="Carrodeguas J.A."/>
            <person name="Denu J.M."/>
        </authorList>
    </citation>
    <scope>FUNCTION</scope>
    <scope>CATALYTIC ACTIVITY</scope>
    <scope>ACTIVITY REGULATION</scope>
    <scope>PATHWAY</scope>
    <scope>ACETYLATION</scope>
    <scope>DEACETYLATION BY SIRT1</scope>
</reference>
<reference key="9">
    <citation type="journal article" date="2018" name="Nat. Cell Biol.">
        <title>A Pck1-directed glycogen metabolic program regulates formation and maintenance of memory CD8+ T cells.</title>
        <authorList>
            <person name="Ma R."/>
            <person name="Ji T."/>
            <person name="Zhang H."/>
            <person name="Dong W."/>
            <person name="Chen X."/>
            <person name="Xu P."/>
            <person name="Chen D."/>
            <person name="Liang X."/>
            <person name="Yin X."/>
            <person name="Liu Y."/>
            <person name="Ma J."/>
            <person name="Tang K."/>
            <person name="Zhang Y."/>
            <person name="Peng Y."/>
            <person name="Lu J."/>
            <person name="Zhang Y."/>
            <person name="Qin X."/>
            <person name="Cao X."/>
            <person name="Wan Y."/>
            <person name="Huang B."/>
        </authorList>
    </citation>
    <scope>FUNCTION</scope>
    <scope>CATALYTIC ACTIVITY</scope>
    <scope>INDUCTION</scope>
</reference>
<evidence type="ECO:0000250" key="1">
    <source>
        <dbReference type="UniProtKB" id="P07379"/>
    </source>
</evidence>
<evidence type="ECO:0000250" key="2">
    <source>
        <dbReference type="UniProtKB" id="P35558"/>
    </source>
</evidence>
<evidence type="ECO:0000250" key="3">
    <source>
        <dbReference type="UniProtKB" id="Q16822"/>
    </source>
</evidence>
<evidence type="ECO:0000269" key="4">
    <source>
    </source>
</evidence>
<evidence type="ECO:0000269" key="5">
    <source>
    </source>
</evidence>
<evidence type="ECO:0000269" key="6">
    <source>
    </source>
</evidence>
<evidence type="ECO:0000269" key="7">
    <source>
    </source>
</evidence>
<evidence type="ECO:0000269" key="8">
    <source>
    </source>
</evidence>
<evidence type="ECO:0000269" key="9">
    <source>
    </source>
</evidence>
<evidence type="ECO:0000303" key="10">
    <source>
    </source>
</evidence>
<evidence type="ECO:0000305" key="11"/>
<evidence type="ECO:0000312" key="12">
    <source>
        <dbReference type="MGI" id="MGI:97501"/>
    </source>
</evidence>
<evidence type="ECO:0007744" key="13">
    <source>
    </source>
</evidence>
<feature type="chain" id="PRO_0000103628" description="Phosphoenolpyruvate carboxykinase, cytosolic [GTP]">
    <location>
        <begin position="1"/>
        <end position="622"/>
    </location>
</feature>
<feature type="region of interest" description="Omega-loop" evidence="1">
    <location>
        <begin position="457"/>
        <end position="487"/>
    </location>
</feature>
<feature type="active site" evidence="1">
    <location>
        <position position="288"/>
    </location>
</feature>
<feature type="binding site" evidence="1">
    <location>
        <position position="87"/>
    </location>
    <ligand>
        <name>substrate</name>
    </ligand>
</feature>
<feature type="binding site" evidence="1">
    <location>
        <begin position="235"/>
        <end position="237"/>
    </location>
    <ligand>
        <name>substrate</name>
    </ligand>
</feature>
<feature type="binding site" evidence="1">
    <location>
        <position position="244"/>
    </location>
    <ligand>
        <name>Mn(2+)</name>
        <dbReference type="ChEBI" id="CHEBI:29035"/>
    </ligand>
</feature>
<feature type="binding site" evidence="1">
    <location>
        <position position="264"/>
    </location>
    <ligand>
        <name>Mn(2+)</name>
        <dbReference type="ChEBI" id="CHEBI:29035"/>
    </ligand>
</feature>
<feature type="binding site" evidence="1">
    <location>
        <position position="286"/>
    </location>
    <ligand>
        <name>substrate</name>
    </ligand>
</feature>
<feature type="binding site" evidence="1">
    <location>
        <begin position="287"/>
        <end position="292"/>
    </location>
    <ligand>
        <name>GTP</name>
        <dbReference type="ChEBI" id="CHEBI:37565"/>
    </ligand>
</feature>
<feature type="binding site" evidence="1">
    <location>
        <position position="311"/>
    </location>
    <ligand>
        <name>Mn(2+)</name>
        <dbReference type="ChEBI" id="CHEBI:29035"/>
    </ligand>
</feature>
<feature type="binding site" evidence="1">
    <location>
        <begin position="403"/>
        <end position="405"/>
    </location>
    <ligand>
        <name>substrate</name>
    </ligand>
</feature>
<feature type="binding site" evidence="1">
    <location>
        <position position="405"/>
    </location>
    <ligand>
        <name>GTP</name>
        <dbReference type="ChEBI" id="CHEBI:37565"/>
    </ligand>
</feature>
<feature type="binding site" evidence="1">
    <location>
        <position position="436"/>
    </location>
    <ligand>
        <name>GTP</name>
        <dbReference type="ChEBI" id="CHEBI:37565"/>
    </ligand>
</feature>
<feature type="binding site" evidence="1">
    <location>
        <begin position="530"/>
        <end position="533"/>
    </location>
    <ligand>
        <name>GTP</name>
        <dbReference type="ChEBI" id="CHEBI:37565"/>
    </ligand>
</feature>
<feature type="modified residue" description="Phosphoserine" evidence="13">
    <location>
        <position position="19"/>
    </location>
</feature>
<feature type="modified residue" description="N6-acetyllysine; by p300/EP300" evidence="2">
    <location>
        <position position="70"/>
    </location>
</feature>
<feature type="modified residue" description="N6-acetyllysine; by p300/EP300" evidence="2">
    <location>
        <position position="71"/>
    </location>
</feature>
<feature type="modified residue" description="Phosphoserine" evidence="2">
    <location>
        <position position="90"/>
    </location>
</feature>
<feature type="modified residue" description="N6-acetyllysine; by p300/EP300" evidence="2">
    <location>
        <position position="91"/>
    </location>
</feature>
<feature type="modified residue" description="Phosphoserine" evidence="13">
    <location>
        <position position="118"/>
    </location>
</feature>
<feature type="modified residue" description="Phosphoserine" evidence="3">
    <location>
        <position position="286"/>
    </location>
</feature>
<feature type="modified residue" description="N6-acetyllysine" evidence="1">
    <location>
        <position position="473"/>
    </location>
</feature>
<feature type="modified residue" description="N6-acetyllysine" evidence="1">
    <location>
        <position position="521"/>
    </location>
</feature>
<feature type="modified residue" description="N6-acetyllysine" evidence="1">
    <location>
        <position position="524"/>
    </location>
</feature>
<dbReference type="EC" id="4.1.1.32" evidence="5 8 9"/>
<dbReference type="EC" id="2.7.11.-" evidence="2"/>
<dbReference type="EMBL" id="AF009605">
    <property type="protein sequence ID" value="AAD01427.1"/>
    <property type="molecule type" value="Genomic_DNA"/>
</dbReference>
<dbReference type="EMBL" id="AK028046">
    <property type="protein sequence ID" value="BAC25718.1"/>
    <property type="molecule type" value="mRNA"/>
</dbReference>
<dbReference type="EMBL" id="AK133496">
    <property type="protein sequence ID" value="BAE21687.1"/>
    <property type="molecule type" value="mRNA"/>
</dbReference>
<dbReference type="EMBL" id="AK149525">
    <property type="protein sequence ID" value="BAE28938.1"/>
    <property type="molecule type" value="mRNA"/>
</dbReference>
<dbReference type="CCDS" id="CCDS17141.1"/>
<dbReference type="RefSeq" id="NP_035174.1">
    <property type="nucleotide sequence ID" value="NM_011044.3"/>
</dbReference>
<dbReference type="SMR" id="Q9Z2V4"/>
<dbReference type="BioGRID" id="202046">
    <property type="interactions" value="1"/>
</dbReference>
<dbReference type="FunCoup" id="Q9Z2V4">
    <property type="interactions" value="1176"/>
</dbReference>
<dbReference type="IntAct" id="Q9Z2V4">
    <property type="interactions" value="1"/>
</dbReference>
<dbReference type="STRING" id="10090.ENSMUSP00000029017"/>
<dbReference type="GlyGen" id="Q9Z2V4">
    <property type="glycosylation" value="1 site, 1 O-linked glycan (1 site)"/>
</dbReference>
<dbReference type="iPTMnet" id="Q9Z2V4"/>
<dbReference type="PhosphoSitePlus" id="Q9Z2V4"/>
<dbReference type="SwissPalm" id="Q9Z2V4"/>
<dbReference type="jPOST" id="Q9Z2V4"/>
<dbReference type="PaxDb" id="10090-ENSMUSP00000029017"/>
<dbReference type="ProteomicsDB" id="287891"/>
<dbReference type="Antibodypedia" id="1643">
    <property type="antibodies" value="603 antibodies from 40 providers"/>
</dbReference>
<dbReference type="DNASU" id="18534"/>
<dbReference type="Ensembl" id="ENSMUST00000029017.6">
    <property type="protein sequence ID" value="ENSMUSP00000029017.6"/>
    <property type="gene ID" value="ENSMUSG00000027513.12"/>
</dbReference>
<dbReference type="GeneID" id="18534"/>
<dbReference type="KEGG" id="mmu:18534"/>
<dbReference type="UCSC" id="uc008odm.1">
    <property type="organism name" value="mouse"/>
</dbReference>
<dbReference type="AGR" id="MGI:97501"/>
<dbReference type="CTD" id="5105"/>
<dbReference type="MGI" id="MGI:97501">
    <property type="gene designation" value="Pck1"/>
</dbReference>
<dbReference type="VEuPathDB" id="HostDB:ENSMUSG00000027513"/>
<dbReference type="eggNOG" id="KOG3749">
    <property type="taxonomic scope" value="Eukaryota"/>
</dbReference>
<dbReference type="GeneTree" id="ENSGT00390000001912"/>
<dbReference type="HOGENOM" id="CLU_028872_1_1_1"/>
<dbReference type="InParanoid" id="Q9Z2V4"/>
<dbReference type="OMA" id="GPTNNWV"/>
<dbReference type="OrthoDB" id="5841594at2759"/>
<dbReference type="PhylomeDB" id="Q9Z2V4"/>
<dbReference type="TreeFam" id="TF314402"/>
<dbReference type="Reactome" id="R-MMU-70263">
    <property type="pathway name" value="Gluconeogenesis"/>
</dbReference>
<dbReference type="SABIO-RK" id="Q9Z2V4"/>
<dbReference type="UniPathway" id="UPA00138"/>
<dbReference type="BioGRID-ORCS" id="18534">
    <property type="hits" value="2 hits in 78 CRISPR screens"/>
</dbReference>
<dbReference type="ChiTaRS" id="Pck1">
    <property type="organism name" value="mouse"/>
</dbReference>
<dbReference type="PRO" id="PR:Q9Z2V4"/>
<dbReference type="Proteomes" id="UP000000589">
    <property type="component" value="Chromosome 2"/>
</dbReference>
<dbReference type="RNAct" id="Q9Z2V4">
    <property type="molecule type" value="protein"/>
</dbReference>
<dbReference type="Bgee" id="ENSMUSG00000027513">
    <property type="expression patterns" value="Expressed in right kidney and 92 other cell types or tissues"/>
</dbReference>
<dbReference type="GO" id="GO:0005829">
    <property type="term" value="C:cytosol"/>
    <property type="evidence" value="ECO:0000314"/>
    <property type="project" value="MGI"/>
</dbReference>
<dbReference type="GO" id="GO:0005783">
    <property type="term" value="C:endoplasmic reticulum"/>
    <property type="evidence" value="ECO:0000250"/>
    <property type="project" value="UniProtKB"/>
</dbReference>
<dbReference type="GO" id="GO:0031406">
    <property type="term" value="F:carboxylic acid binding"/>
    <property type="evidence" value="ECO:0007669"/>
    <property type="project" value="Ensembl"/>
</dbReference>
<dbReference type="GO" id="GO:0019003">
    <property type="term" value="F:GDP binding"/>
    <property type="evidence" value="ECO:0007669"/>
    <property type="project" value="Ensembl"/>
</dbReference>
<dbReference type="GO" id="GO:0005525">
    <property type="term" value="F:GTP binding"/>
    <property type="evidence" value="ECO:0007669"/>
    <property type="project" value="UniProtKB-KW"/>
</dbReference>
<dbReference type="GO" id="GO:0000287">
    <property type="term" value="F:magnesium ion binding"/>
    <property type="evidence" value="ECO:0007669"/>
    <property type="project" value="Ensembl"/>
</dbReference>
<dbReference type="GO" id="GO:0030145">
    <property type="term" value="F:manganese ion binding"/>
    <property type="evidence" value="ECO:0007669"/>
    <property type="project" value="Ensembl"/>
</dbReference>
<dbReference type="GO" id="GO:0004613">
    <property type="term" value="F:phosphoenolpyruvate carboxykinase (GTP) activity"/>
    <property type="evidence" value="ECO:0000315"/>
    <property type="project" value="UniProtKB"/>
</dbReference>
<dbReference type="GO" id="GO:0004611">
    <property type="term" value="F:phosphoenolpyruvate carboxykinase activity"/>
    <property type="evidence" value="ECO:0000315"/>
    <property type="project" value="MGI"/>
</dbReference>
<dbReference type="GO" id="GO:0106264">
    <property type="term" value="F:protein serine kinase activity (using GTP as donor)"/>
    <property type="evidence" value="ECO:0000250"/>
    <property type="project" value="UniProtKB"/>
</dbReference>
<dbReference type="GO" id="GO:0071475">
    <property type="term" value="P:cellular hyperosmotic salinity response"/>
    <property type="evidence" value="ECO:0007669"/>
    <property type="project" value="Ensembl"/>
</dbReference>
<dbReference type="GO" id="GO:0071477">
    <property type="term" value="P:cellular hypotonic salinity response"/>
    <property type="evidence" value="ECO:0007669"/>
    <property type="project" value="Ensembl"/>
</dbReference>
<dbReference type="GO" id="GO:0071320">
    <property type="term" value="P:cellular response to cAMP"/>
    <property type="evidence" value="ECO:0007669"/>
    <property type="project" value="Ensembl"/>
</dbReference>
<dbReference type="GO" id="GO:0071332">
    <property type="term" value="P:cellular response to fructose stimulus"/>
    <property type="evidence" value="ECO:0007669"/>
    <property type="project" value="Ensembl"/>
</dbReference>
<dbReference type="GO" id="GO:0071377">
    <property type="term" value="P:cellular response to glucagon stimulus"/>
    <property type="evidence" value="ECO:0007669"/>
    <property type="project" value="Ensembl"/>
</dbReference>
<dbReference type="GO" id="GO:0071333">
    <property type="term" value="P:cellular response to glucose stimulus"/>
    <property type="evidence" value="ECO:0000250"/>
    <property type="project" value="UniProtKB"/>
</dbReference>
<dbReference type="GO" id="GO:0071456">
    <property type="term" value="P:cellular response to hypoxia"/>
    <property type="evidence" value="ECO:0007669"/>
    <property type="project" value="Ensembl"/>
</dbReference>
<dbReference type="GO" id="GO:0032869">
    <property type="term" value="P:cellular response to insulin stimulus"/>
    <property type="evidence" value="ECO:0000250"/>
    <property type="project" value="UniProtKB"/>
</dbReference>
<dbReference type="GO" id="GO:0071347">
    <property type="term" value="P:cellular response to interleukin-1"/>
    <property type="evidence" value="ECO:0007669"/>
    <property type="project" value="Ensembl"/>
</dbReference>
<dbReference type="GO" id="GO:1904628">
    <property type="term" value="P:cellular response to phorbol 13-acetate 12-myristate"/>
    <property type="evidence" value="ECO:0007669"/>
    <property type="project" value="Ensembl"/>
</dbReference>
<dbReference type="GO" id="GO:0051365">
    <property type="term" value="P:cellular response to potassium ion starvation"/>
    <property type="evidence" value="ECO:0000314"/>
    <property type="project" value="MGI"/>
</dbReference>
<dbReference type="GO" id="GO:0097403">
    <property type="term" value="P:cellular response to raffinose"/>
    <property type="evidence" value="ECO:0007669"/>
    <property type="project" value="Ensembl"/>
</dbReference>
<dbReference type="GO" id="GO:0071300">
    <property type="term" value="P:cellular response to retinoic acid"/>
    <property type="evidence" value="ECO:0007669"/>
    <property type="project" value="Ensembl"/>
</dbReference>
<dbReference type="GO" id="GO:0071356">
    <property type="term" value="P:cellular response to tumor necrosis factor"/>
    <property type="evidence" value="ECO:0007669"/>
    <property type="project" value="Ensembl"/>
</dbReference>
<dbReference type="GO" id="GO:0006094">
    <property type="term" value="P:gluconeogenesis"/>
    <property type="evidence" value="ECO:0000314"/>
    <property type="project" value="MGI"/>
</dbReference>
<dbReference type="GO" id="GO:0046166">
    <property type="term" value="P:glyceraldehyde-3-phosphate biosynthetic process"/>
    <property type="evidence" value="ECO:0000315"/>
    <property type="project" value="MGI"/>
</dbReference>
<dbReference type="GO" id="GO:0046327">
    <property type="term" value="P:glycerol biosynthetic process from pyruvate"/>
    <property type="evidence" value="ECO:0000315"/>
    <property type="project" value="MGI"/>
</dbReference>
<dbReference type="GO" id="GO:0006629">
    <property type="term" value="P:lipid metabolic process"/>
    <property type="evidence" value="ECO:0000315"/>
    <property type="project" value="MGI"/>
</dbReference>
<dbReference type="GO" id="GO:0006107">
    <property type="term" value="P:oxaloacetate metabolic process"/>
    <property type="evidence" value="ECO:0000315"/>
    <property type="project" value="UniProtKB"/>
</dbReference>
<dbReference type="GO" id="GO:0018105">
    <property type="term" value="P:peptidyl-serine phosphorylation"/>
    <property type="evidence" value="ECO:0000250"/>
    <property type="project" value="UniProtKB"/>
</dbReference>
<dbReference type="GO" id="GO:0046889">
    <property type="term" value="P:positive regulation of lipid biosynthetic process"/>
    <property type="evidence" value="ECO:0007669"/>
    <property type="project" value="Ensembl"/>
</dbReference>
<dbReference type="GO" id="GO:0043382">
    <property type="term" value="P:positive regulation of memory T cell differentiation"/>
    <property type="evidence" value="ECO:0000315"/>
    <property type="project" value="UniProtKB"/>
</dbReference>
<dbReference type="GO" id="GO:0045944">
    <property type="term" value="P:positive regulation of transcription by RNA polymerase II"/>
    <property type="evidence" value="ECO:0000314"/>
    <property type="project" value="MGI"/>
</dbReference>
<dbReference type="GO" id="GO:0046890">
    <property type="term" value="P:regulation of lipid biosynthetic process"/>
    <property type="evidence" value="ECO:0000250"/>
    <property type="project" value="UniProtKB"/>
</dbReference>
<dbReference type="GO" id="GO:0014823">
    <property type="term" value="P:response to activity"/>
    <property type="evidence" value="ECO:0007669"/>
    <property type="project" value="Ensembl"/>
</dbReference>
<dbReference type="GO" id="GO:0009617">
    <property type="term" value="P:response to bacterium"/>
    <property type="evidence" value="ECO:0000270"/>
    <property type="project" value="MGI"/>
</dbReference>
<dbReference type="GO" id="GO:0070741">
    <property type="term" value="P:response to interleukin-6"/>
    <property type="evidence" value="ECO:0007669"/>
    <property type="project" value="Ensembl"/>
</dbReference>
<dbReference type="GO" id="GO:0032496">
    <property type="term" value="P:response to lipopolysaccharide"/>
    <property type="evidence" value="ECO:0007669"/>
    <property type="project" value="Ensembl"/>
</dbReference>
<dbReference type="GO" id="GO:1904640">
    <property type="term" value="P:response to methionine"/>
    <property type="evidence" value="ECO:0007669"/>
    <property type="project" value="Ensembl"/>
</dbReference>
<dbReference type="GO" id="GO:0072350">
    <property type="term" value="P:tricarboxylic acid metabolic process"/>
    <property type="evidence" value="ECO:0007669"/>
    <property type="project" value="Ensembl"/>
</dbReference>
<dbReference type="CDD" id="cd00819">
    <property type="entry name" value="PEPCK_GTP"/>
    <property type="match status" value="1"/>
</dbReference>
<dbReference type="FunFam" id="3.90.228.20:FF:000005">
    <property type="entry name" value="Phosphoenolpyruvate carboxykinase [GTP], mitochondrial"/>
    <property type="match status" value="1"/>
</dbReference>
<dbReference type="FunFam" id="2.170.8.10:FF:000006">
    <property type="entry name" value="Phosphoenolpyruvate carboxykinase, cytosolic [GTP]"/>
    <property type="match status" value="1"/>
</dbReference>
<dbReference type="FunFam" id="3.40.449.10:FF:000003">
    <property type="entry name" value="Phosphoenolpyruvate carboxykinase, cytosolic [GTP]"/>
    <property type="match status" value="1"/>
</dbReference>
<dbReference type="Gene3D" id="3.90.228.20">
    <property type="match status" value="1"/>
</dbReference>
<dbReference type="Gene3D" id="3.40.449.10">
    <property type="entry name" value="Phosphoenolpyruvate Carboxykinase, domain 1"/>
    <property type="match status" value="1"/>
</dbReference>
<dbReference type="Gene3D" id="2.170.8.10">
    <property type="entry name" value="Phosphoenolpyruvate Carboxykinase, domain 2"/>
    <property type="match status" value="1"/>
</dbReference>
<dbReference type="HAMAP" id="MF_00452">
    <property type="entry name" value="PEPCK_GTP"/>
    <property type="match status" value="1"/>
</dbReference>
<dbReference type="InterPro" id="IPR018091">
    <property type="entry name" value="PEP_carboxykin_GTP_CS"/>
</dbReference>
<dbReference type="InterPro" id="IPR013035">
    <property type="entry name" value="PEP_carboxykinase_C"/>
</dbReference>
<dbReference type="InterPro" id="IPR008209">
    <property type="entry name" value="PEP_carboxykinase_GTP"/>
</dbReference>
<dbReference type="InterPro" id="IPR035077">
    <property type="entry name" value="PEP_carboxykinase_GTP_C"/>
</dbReference>
<dbReference type="InterPro" id="IPR035078">
    <property type="entry name" value="PEP_carboxykinase_GTP_N"/>
</dbReference>
<dbReference type="InterPro" id="IPR008210">
    <property type="entry name" value="PEP_carboxykinase_N"/>
</dbReference>
<dbReference type="NCBIfam" id="NF003253">
    <property type="entry name" value="PRK04210.1"/>
    <property type="match status" value="1"/>
</dbReference>
<dbReference type="PANTHER" id="PTHR11561">
    <property type="entry name" value="PHOSPHOENOLPYRUVATE CARBOXYKINASE"/>
    <property type="match status" value="1"/>
</dbReference>
<dbReference type="PANTHER" id="PTHR11561:SF18">
    <property type="entry name" value="PHOSPHOENOLPYRUVATE CARBOXYKINASE, CYTOSOLIC [GTP]"/>
    <property type="match status" value="1"/>
</dbReference>
<dbReference type="Pfam" id="PF00821">
    <property type="entry name" value="PEPCK_GTP"/>
    <property type="match status" value="1"/>
</dbReference>
<dbReference type="Pfam" id="PF17297">
    <property type="entry name" value="PEPCK_N"/>
    <property type="match status" value="1"/>
</dbReference>
<dbReference type="PIRSF" id="PIRSF001348">
    <property type="entry name" value="PEP_carboxykinase_GTP"/>
    <property type="match status" value="1"/>
</dbReference>
<dbReference type="SUPFAM" id="SSF68923">
    <property type="entry name" value="PEP carboxykinase N-terminal domain"/>
    <property type="match status" value="1"/>
</dbReference>
<dbReference type="SUPFAM" id="SSF53795">
    <property type="entry name" value="PEP carboxykinase-like"/>
    <property type="match status" value="1"/>
</dbReference>
<dbReference type="PROSITE" id="PS00505">
    <property type="entry name" value="PEPCK_GTP"/>
    <property type="match status" value="1"/>
</dbReference>
<organism>
    <name type="scientific">Mus musculus</name>
    <name type="common">Mouse</name>
    <dbReference type="NCBI Taxonomy" id="10090"/>
    <lineage>
        <taxon>Eukaryota</taxon>
        <taxon>Metazoa</taxon>
        <taxon>Chordata</taxon>
        <taxon>Craniata</taxon>
        <taxon>Vertebrata</taxon>
        <taxon>Euteleostomi</taxon>
        <taxon>Mammalia</taxon>
        <taxon>Eutheria</taxon>
        <taxon>Euarchontoglires</taxon>
        <taxon>Glires</taxon>
        <taxon>Rodentia</taxon>
        <taxon>Myomorpha</taxon>
        <taxon>Muroidea</taxon>
        <taxon>Muridae</taxon>
        <taxon>Murinae</taxon>
        <taxon>Mus</taxon>
        <taxon>Mus</taxon>
    </lineage>
</organism>
<name>PCKGC_MOUSE</name>
<keyword id="KW-0007">Acetylation</keyword>
<keyword id="KW-0963">Cytoplasm</keyword>
<keyword id="KW-0210">Decarboxylase</keyword>
<keyword id="KW-0256">Endoplasmic reticulum</keyword>
<keyword id="KW-0312">Gluconeogenesis</keyword>
<keyword id="KW-0342">GTP-binding</keyword>
<keyword id="KW-0418">Kinase</keyword>
<keyword id="KW-0456">Lyase</keyword>
<keyword id="KW-0464">Manganese</keyword>
<keyword id="KW-0479">Metal-binding</keyword>
<keyword id="KW-0547">Nucleotide-binding</keyword>
<keyword id="KW-0597">Phosphoprotein</keyword>
<keyword id="KW-1185">Reference proteome</keyword>
<keyword id="KW-0808">Transferase</keyword>
<keyword id="KW-0832">Ubl conjugation</keyword>
<protein>
    <recommendedName>
        <fullName evidence="11">Phosphoenolpyruvate carboxykinase, cytosolic [GTP]</fullName>
        <shortName>PEPCK-C</shortName>
        <ecNumber evidence="5 8 9">4.1.1.32</ecNumber>
    </recommendedName>
    <alternativeName>
        <fullName evidence="11">Serine-protein kinase PCK1</fullName>
        <ecNumber evidence="2">2.7.11.-</ecNumber>
    </alternativeName>
</protein>